<accession>Q3AHX1</accession>
<proteinExistence type="inferred from homology"/>
<evidence type="ECO:0000255" key="1">
    <source>
        <dbReference type="HAMAP-Rule" id="MF_00170"/>
    </source>
</evidence>
<sequence>MADLQTQMKQAVADAAVEQIKDGMVLGLGSGSTAALMIQGLGAKLASGELKDIVGVTTSFQGEVLAAELNIPLLSLNAVSRIDLAIDGADEVDPGFQLIKGGGACHVQEKLVAARADRFVVVVDSTKLVDRLNLGFLLPVEVLPGAWRQVKQQLEALGGSAELRMAQRKAGPVVTDQGNLVLDAKLDGGISDPVALEQTINNIPGVLENGLFVNITDEVLVGEITDGVAGVRSLQKRLS</sequence>
<organism>
    <name type="scientific">Synechococcus sp. (strain CC9605)</name>
    <dbReference type="NCBI Taxonomy" id="110662"/>
    <lineage>
        <taxon>Bacteria</taxon>
        <taxon>Bacillati</taxon>
        <taxon>Cyanobacteriota</taxon>
        <taxon>Cyanophyceae</taxon>
        <taxon>Synechococcales</taxon>
        <taxon>Synechococcaceae</taxon>
        <taxon>Synechococcus</taxon>
    </lineage>
</organism>
<name>RPIA_SYNSC</name>
<dbReference type="EC" id="5.3.1.6" evidence="1"/>
<dbReference type="EMBL" id="CP000110">
    <property type="protein sequence ID" value="ABB35811.1"/>
    <property type="molecule type" value="Genomic_DNA"/>
</dbReference>
<dbReference type="RefSeq" id="WP_011365020.1">
    <property type="nucleotide sequence ID" value="NC_007516.1"/>
</dbReference>
<dbReference type="SMR" id="Q3AHX1"/>
<dbReference type="STRING" id="110662.Syncc9605_2071"/>
<dbReference type="KEGG" id="syd:Syncc9605_2071"/>
<dbReference type="eggNOG" id="COG0120">
    <property type="taxonomic scope" value="Bacteria"/>
</dbReference>
<dbReference type="HOGENOM" id="CLU_056590_1_1_3"/>
<dbReference type="OrthoDB" id="5870696at2"/>
<dbReference type="UniPathway" id="UPA00115">
    <property type="reaction ID" value="UER00412"/>
</dbReference>
<dbReference type="GO" id="GO:0005829">
    <property type="term" value="C:cytosol"/>
    <property type="evidence" value="ECO:0007669"/>
    <property type="project" value="TreeGrafter"/>
</dbReference>
<dbReference type="GO" id="GO:0004751">
    <property type="term" value="F:ribose-5-phosphate isomerase activity"/>
    <property type="evidence" value="ECO:0007669"/>
    <property type="project" value="UniProtKB-UniRule"/>
</dbReference>
<dbReference type="GO" id="GO:0006014">
    <property type="term" value="P:D-ribose metabolic process"/>
    <property type="evidence" value="ECO:0007669"/>
    <property type="project" value="TreeGrafter"/>
</dbReference>
<dbReference type="GO" id="GO:0009052">
    <property type="term" value="P:pentose-phosphate shunt, non-oxidative branch"/>
    <property type="evidence" value="ECO:0007669"/>
    <property type="project" value="UniProtKB-UniRule"/>
</dbReference>
<dbReference type="CDD" id="cd01398">
    <property type="entry name" value="RPI_A"/>
    <property type="match status" value="1"/>
</dbReference>
<dbReference type="FunFam" id="3.30.70.260:FF:000018">
    <property type="entry name" value="Ribose-5-phosphate isomerase A"/>
    <property type="match status" value="1"/>
</dbReference>
<dbReference type="FunFam" id="3.40.50.1360:FF:000001">
    <property type="entry name" value="Ribose-5-phosphate isomerase A"/>
    <property type="match status" value="1"/>
</dbReference>
<dbReference type="Gene3D" id="3.30.70.260">
    <property type="match status" value="1"/>
</dbReference>
<dbReference type="Gene3D" id="3.40.50.1360">
    <property type="match status" value="1"/>
</dbReference>
<dbReference type="HAMAP" id="MF_00170">
    <property type="entry name" value="Rib_5P_isom_A"/>
    <property type="match status" value="1"/>
</dbReference>
<dbReference type="InterPro" id="IPR037171">
    <property type="entry name" value="NagB/RpiA_transferase-like"/>
</dbReference>
<dbReference type="InterPro" id="IPR020672">
    <property type="entry name" value="Ribose5P_isomerase_typA_subgr"/>
</dbReference>
<dbReference type="InterPro" id="IPR004788">
    <property type="entry name" value="Ribose5P_isomerase_type_A"/>
</dbReference>
<dbReference type="NCBIfam" id="NF001924">
    <property type="entry name" value="PRK00702.1"/>
    <property type="match status" value="1"/>
</dbReference>
<dbReference type="NCBIfam" id="TIGR00021">
    <property type="entry name" value="rpiA"/>
    <property type="match status" value="1"/>
</dbReference>
<dbReference type="PANTHER" id="PTHR11934">
    <property type="entry name" value="RIBOSE-5-PHOSPHATE ISOMERASE"/>
    <property type="match status" value="1"/>
</dbReference>
<dbReference type="PANTHER" id="PTHR11934:SF0">
    <property type="entry name" value="RIBOSE-5-PHOSPHATE ISOMERASE"/>
    <property type="match status" value="1"/>
</dbReference>
<dbReference type="Pfam" id="PF06026">
    <property type="entry name" value="Rib_5-P_isom_A"/>
    <property type="match status" value="1"/>
</dbReference>
<dbReference type="SMART" id="SM01134">
    <property type="entry name" value="DeoRC"/>
    <property type="match status" value="1"/>
</dbReference>
<dbReference type="SUPFAM" id="SSF75445">
    <property type="entry name" value="D-ribose-5-phosphate isomerase (RpiA), lid domain"/>
    <property type="match status" value="1"/>
</dbReference>
<dbReference type="SUPFAM" id="SSF100950">
    <property type="entry name" value="NagB/RpiA/CoA transferase-like"/>
    <property type="match status" value="1"/>
</dbReference>
<feature type="chain" id="PRO_1000017022" description="Ribose-5-phosphate isomerase A">
    <location>
        <begin position="1"/>
        <end position="239"/>
    </location>
</feature>
<feature type="active site" description="Proton acceptor" evidence="1">
    <location>
        <position position="109"/>
    </location>
</feature>
<feature type="binding site" evidence="1">
    <location>
        <begin position="30"/>
        <end position="33"/>
    </location>
    <ligand>
        <name>substrate</name>
    </ligand>
</feature>
<feature type="binding site" evidence="1">
    <location>
        <begin position="87"/>
        <end position="90"/>
    </location>
    <ligand>
        <name>substrate</name>
    </ligand>
</feature>
<feature type="binding site" evidence="1">
    <location>
        <begin position="100"/>
        <end position="103"/>
    </location>
    <ligand>
        <name>substrate</name>
    </ligand>
</feature>
<feature type="binding site" evidence="1">
    <location>
        <position position="127"/>
    </location>
    <ligand>
        <name>substrate</name>
    </ligand>
</feature>
<keyword id="KW-0413">Isomerase</keyword>
<reference key="1">
    <citation type="submission" date="2005-07" db="EMBL/GenBank/DDBJ databases">
        <title>Complete sequence of Synechococcus sp. CC9605.</title>
        <authorList>
            <consortium name="US DOE Joint Genome Institute"/>
            <person name="Copeland A."/>
            <person name="Lucas S."/>
            <person name="Lapidus A."/>
            <person name="Barry K."/>
            <person name="Detter J.C."/>
            <person name="Glavina T."/>
            <person name="Hammon N."/>
            <person name="Israni S."/>
            <person name="Pitluck S."/>
            <person name="Schmutz J."/>
            <person name="Martinez M."/>
            <person name="Larimer F."/>
            <person name="Land M."/>
            <person name="Kyrpides N."/>
            <person name="Ivanova N."/>
            <person name="Richardson P."/>
        </authorList>
    </citation>
    <scope>NUCLEOTIDE SEQUENCE [LARGE SCALE GENOMIC DNA]</scope>
    <source>
        <strain>CC9605</strain>
    </source>
</reference>
<gene>
    <name evidence="1" type="primary">rpiA</name>
    <name type="ordered locus">Syncc9605_2071</name>
</gene>
<protein>
    <recommendedName>
        <fullName evidence="1">Ribose-5-phosphate isomerase A</fullName>
        <ecNumber evidence="1">5.3.1.6</ecNumber>
    </recommendedName>
    <alternativeName>
        <fullName evidence="1">Phosphoriboisomerase A</fullName>
        <shortName evidence="1">PRI</shortName>
    </alternativeName>
</protein>
<comment type="function">
    <text evidence="1">Catalyzes the reversible conversion of ribose-5-phosphate to ribulose 5-phosphate.</text>
</comment>
<comment type="catalytic activity">
    <reaction evidence="1">
        <text>aldehydo-D-ribose 5-phosphate = D-ribulose 5-phosphate</text>
        <dbReference type="Rhea" id="RHEA:14657"/>
        <dbReference type="ChEBI" id="CHEBI:58121"/>
        <dbReference type="ChEBI" id="CHEBI:58273"/>
        <dbReference type="EC" id="5.3.1.6"/>
    </reaction>
</comment>
<comment type="pathway">
    <text evidence="1">Carbohydrate degradation; pentose phosphate pathway; D-ribose 5-phosphate from D-ribulose 5-phosphate (non-oxidative stage): step 1/1.</text>
</comment>
<comment type="subunit">
    <text evidence="1">Homodimer.</text>
</comment>
<comment type="similarity">
    <text evidence="1">Belongs to the ribose 5-phosphate isomerase family.</text>
</comment>